<name>PVK1_LOCMI</name>
<accession>P83382</accession>
<evidence type="ECO:0000255" key="1"/>
<evidence type="ECO:0000269" key="2">
    <source>
    </source>
</evidence>
<evidence type="ECO:0000269" key="3">
    <source>
    </source>
</evidence>
<evidence type="ECO:0000305" key="4"/>
<protein>
    <recommendedName>
        <fullName>Periviscerokinin-1</fullName>
    </recommendedName>
    <alternativeName>
        <fullName>Lom-PVK-1</fullName>
    </alternativeName>
</protein>
<feature type="peptide" id="PRO_0000044237" description="Periviscerokinin-1" evidence="2 3">
    <location>
        <begin position="1"/>
        <end position="10"/>
    </location>
</feature>
<feature type="modified residue" description="Valine amide" evidence="2 3">
    <location>
        <position position="10"/>
    </location>
</feature>
<proteinExistence type="evidence at protein level"/>
<sequence length="10" mass="1105">AAGLFQFPRV</sequence>
<comment type="function">
    <text evidence="2">Myotropic peptide; increases the frequency of contraction of the heart and stimulates amplitude and tonus of the foregut.</text>
</comment>
<comment type="subcellular location">
    <subcellularLocation>
        <location evidence="4">Secreted</location>
    </subcellularLocation>
</comment>
<comment type="tissue specificity">
    <text evidence="3">Found in the abdominal ganglia and perisympathetic organs. Not detected in the thoracic ganglia, subesophageal ganglion, corpora cardiaca, corpora allata, hypocerebral ganglion or frontal ganglion.</text>
</comment>
<comment type="mass spectrometry" mass="1104.5" method="MALDI" evidence="2 3"/>
<comment type="mass spectrometry" mass="1103.6" method="MALDI" evidence="2 3"/>
<comment type="similarity">
    <text evidence="1">Belongs to the periviscerokinin family.</text>
</comment>
<organism>
    <name type="scientific">Locusta migratoria</name>
    <name type="common">Migratory locust</name>
    <dbReference type="NCBI Taxonomy" id="7004"/>
    <lineage>
        <taxon>Eukaryota</taxon>
        <taxon>Metazoa</taxon>
        <taxon>Ecdysozoa</taxon>
        <taxon>Arthropoda</taxon>
        <taxon>Hexapoda</taxon>
        <taxon>Insecta</taxon>
        <taxon>Pterygota</taxon>
        <taxon>Neoptera</taxon>
        <taxon>Polyneoptera</taxon>
        <taxon>Orthoptera</taxon>
        <taxon>Caelifera</taxon>
        <taxon>Acrididea</taxon>
        <taxon>Acridomorpha</taxon>
        <taxon>Acridoidea</taxon>
        <taxon>Acrididae</taxon>
        <taxon>Oedipodinae</taxon>
        <taxon>Locusta</taxon>
    </lineage>
</organism>
<keyword id="KW-0027">Amidation</keyword>
<keyword id="KW-0903">Direct protein sequencing</keyword>
<keyword id="KW-0527">Neuropeptide</keyword>
<keyword id="KW-0964">Secreted</keyword>
<reference evidence="4" key="1">
    <citation type="journal article" date="2002" name="Peptides">
        <title>Identification of the abundant neuropeptide from abdominal perisympathetic organs of locusts.</title>
        <authorList>
            <person name="Predel R."/>
            <person name="Gaede G."/>
        </authorList>
    </citation>
    <scope>PROTEIN SEQUENCE</scope>
    <scope>FUNCTION</scope>
    <scope>MASS SPECTROMETRY</scope>
    <scope>AMIDATION AT VAL-10</scope>
    <source>
        <tissue evidence="2">Abdominal perisympathetic organs</tissue>
    </source>
</reference>
<reference evidence="4" key="2">
    <citation type="journal article" date="2003" name="Biochem. Biophys. Res. Commun.">
        <title>Mass spectrometric analysis of the perisympathetic organs in locusts: identification of novel periviscerokinins.</title>
        <authorList>
            <person name="Clynen E."/>
            <person name="Huybrechts J."/>
            <person name="De Loof A."/>
            <person name="Schoofs L."/>
        </authorList>
    </citation>
    <scope>PROTEIN SEQUENCE</scope>
    <scope>TISSUE SPECIFICITY</scope>
    <scope>MASS SPECTROMETRY</scope>
    <scope>AMIDATION AT VAL-10</scope>
    <source>
        <tissue evidence="3">Abdominal perisympathetic organs</tissue>
    </source>
</reference>
<dbReference type="GO" id="GO:0005576">
    <property type="term" value="C:extracellular region"/>
    <property type="evidence" value="ECO:0000314"/>
    <property type="project" value="UniProtKB"/>
</dbReference>
<dbReference type="GO" id="GO:0005184">
    <property type="term" value="F:neuropeptide hormone activity"/>
    <property type="evidence" value="ECO:0000314"/>
    <property type="project" value="UniProtKB"/>
</dbReference>
<dbReference type="GO" id="GO:0007218">
    <property type="term" value="P:neuropeptide signaling pathway"/>
    <property type="evidence" value="ECO:0000314"/>
    <property type="project" value="UniProtKB"/>
</dbReference>